<organism>
    <name type="scientific">Methanosarcina mazei (strain ATCC BAA-159 / DSM 3647 / Goe1 / Go1 / JCM 11833 / OCM 88)</name>
    <name type="common">Methanosarcina frisia</name>
    <dbReference type="NCBI Taxonomy" id="192952"/>
    <lineage>
        <taxon>Archaea</taxon>
        <taxon>Methanobacteriati</taxon>
        <taxon>Methanobacteriota</taxon>
        <taxon>Stenosarchaea group</taxon>
        <taxon>Methanomicrobia</taxon>
        <taxon>Methanosarcinales</taxon>
        <taxon>Methanosarcinaceae</taxon>
        <taxon>Methanosarcina</taxon>
    </lineage>
</organism>
<sequence>MFQIGEALMGQGSELAHVDLMIGDKGGPVGQAFANGLTQLSAGHTPLLSVIRPNLPPKPSTLIIPKVTVKNMDQAARIFGPAQSAVAKAVADSVEEGVIPKDQVEDLVIVASVFIHPEAQDYNKIYRYNYGATKLAIKRALEGFPDIDTVLEESNKSTHAIMGFKVTRLWDPPYLQIAFDNPNLEFVLSAISEIPKSDHVIIEAGTPLIKRYGTDVISKIRQVRPDAFIVADLKTLDTGNLEARMVADAAGDAIVVSALAPISTIDKLIEEAHKTGIYAVMDTLNQQDPISVLKQLKVMPDVIELHRGIDIEGTEHAWGNIGEIKKIAPKALVAVAGGVRLDKVPVALSQGADILVVGRAITNAKDVREMAEQFINSLNKPEIDQFRVMTDF</sequence>
<comment type="function">
    <text evidence="1">Catalyzes the condensation of formaldehyde with tetrahydromethanopterin (H(4)MPT) to 5,10-methylenetetrahydromethanopterin.</text>
</comment>
<comment type="function">
    <text evidence="1">Catalyzes the reversible formation of ribulose-5-phosphate and formaldehyde from 3-hexulose-6-phosphate.</text>
</comment>
<comment type="catalytic activity">
    <reaction evidence="1">
        <text>5,6,7,8-tetrahydromethanopterin + formaldehyde = 5,10-methylenetetrahydromethanopterin + H2O</text>
        <dbReference type="Rhea" id="RHEA:24678"/>
        <dbReference type="ChEBI" id="CHEBI:15377"/>
        <dbReference type="ChEBI" id="CHEBI:16842"/>
        <dbReference type="ChEBI" id="CHEBI:57818"/>
        <dbReference type="ChEBI" id="CHEBI:58103"/>
        <dbReference type="EC" id="4.2.1.147"/>
    </reaction>
</comment>
<comment type="catalytic activity">
    <reaction evidence="1">
        <text>D-ribulose 5-phosphate + formaldehyde = D-arabino-hex-3-ulose 6-phosphate</text>
        <dbReference type="Rhea" id="RHEA:25201"/>
        <dbReference type="ChEBI" id="CHEBI:16842"/>
        <dbReference type="ChEBI" id="CHEBI:58121"/>
        <dbReference type="ChEBI" id="CHEBI:58542"/>
        <dbReference type="EC" id="4.1.2.43"/>
    </reaction>
</comment>
<comment type="pathway">
    <text evidence="1">Carbohydrate biosynthesis; D-ribose 5-phosphate biosynthesis.</text>
</comment>
<comment type="similarity">
    <text evidence="1">In the N-terminal section; belongs to the formaldehyde-activating enzyme family.</text>
</comment>
<comment type="similarity">
    <text evidence="1">In the C-terminal section; belongs to the HPS/KGPDC family. HPS subfamily.</text>
</comment>
<feature type="chain" id="PRO_0000236086" description="Bifunctional enzyme Fae/Hps">
    <location>
        <begin position="1"/>
        <end position="392"/>
    </location>
</feature>
<feature type="region of interest" description="Formaldehyde-activating enzyme" evidence="1">
    <location>
        <begin position="1"/>
        <end position="161"/>
    </location>
</feature>
<feature type="region of interest" description="3-hexulose-6-phosphate synthase" evidence="1">
    <location>
        <begin position="162"/>
        <end position="392"/>
    </location>
</feature>
<feature type="active site" description="Proton donor" evidence="1">
    <location>
        <position position="17"/>
    </location>
</feature>
<feature type="binding site" evidence="1">
    <location>
        <position position="19"/>
    </location>
    <ligand>
        <name>substrate</name>
    </ligand>
</feature>
<feature type="binding site" evidence="1">
    <location>
        <position position="48"/>
    </location>
    <ligand>
        <name>substrate</name>
    </ligand>
</feature>
<feature type="binding site" evidence="1">
    <location>
        <position position="66"/>
    </location>
    <ligand>
        <name>substrate</name>
    </ligand>
</feature>
<feature type="binding site" evidence="1">
    <location>
        <position position="68"/>
    </location>
    <ligand>
        <name>substrate</name>
    </ligand>
</feature>
<feature type="binding site" evidence="1">
    <location>
        <position position="83"/>
    </location>
    <ligand>
        <name>substrate</name>
    </ligand>
</feature>
<reference key="1">
    <citation type="journal article" date="2002" name="J. Mol. Microbiol. Biotechnol.">
        <title>The genome of Methanosarcina mazei: evidence for lateral gene transfer between Bacteria and Archaea.</title>
        <authorList>
            <person name="Deppenmeier U."/>
            <person name="Johann A."/>
            <person name="Hartsch T."/>
            <person name="Merkl R."/>
            <person name="Schmitz R.A."/>
            <person name="Martinez-Arias R."/>
            <person name="Henne A."/>
            <person name="Wiezer A."/>
            <person name="Baeumer S."/>
            <person name="Jacobi C."/>
            <person name="Brueggemann H."/>
            <person name="Lienard T."/>
            <person name="Christmann A."/>
            <person name="Boemecke M."/>
            <person name="Steckel S."/>
            <person name="Bhattacharyya A."/>
            <person name="Lykidis A."/>
            <person name="Overbeek R."/>
            <person name="Klenk H.-P."/>
            <person name="Gunsalus R.P."/>
            <person name="Fritz H.-J."/>
            <person name="Gottschalk G."/>
        </authorList>
    </citation>
    <scope>NUCLEOTIDE SEQUENCE [LARGE SCALE GENOMIC DNA]</scope>
    <source>
        <strain>ATCC BAA-159 / DSM 3647 / Goe1 / Go1 / JCM 11833 / OCM 88</strain>
    </source>
</reference>
<gene>
    <name evidence="1" type="primary">fae-hps</name>
    <name type="ordered locus">MM_1279</name>
</gene>
<accession>Q8PXE1</accession>
<protein>
    <recommendedName>
        <fullName evidence="1">Bifunctional enzyme Fae/Hps</fullName>
    </recommendedName>
    <domain>
        <recommendedName>
            <fullName evidence="1">5,6,7,8-tetrahydromethanopterin hydro-lyase</fullName>
            <ecNumber evidence="1">4.2.1.147</ecNumber>
        </recommendedName>
        <alternativeName>
            <fullName evidence="1">Formaldehyde-activating enzyme</fullName>
            <shortName evidence="1">Fae</shortName>
        </alternativeName>
    </domain>
    <domain>
        <recommendedName>
            <fullName evidence="1">3-hexulose-6-phosphate synthase</fullName>
            <shortName evidence="1">HPS</shortName>
            <ecNumber evidence="1">4.1.2.43</ecNumber>
        </recommendedName>
        <alternativeName>
            <fullName evidence="1">D-arabino-3-hexulose-6-phosphate formaldehyde lyase</fullName>
        </alternativeName>
    </domain>
</protein>
<dbReference type="EC" id="4.2.1.147" evidence="1"/>
<dbReference type="EC" id="4.1.2.43" evidence="1"/>
<dbReference type="EMBL" id="AE008384">
    <property type="protein sequence ID" value="AAM30975.1"/>
    <property type="molecule type" value="Genomic_DNA"/>
</dbReference>
<dbReference type="RefSeq" id="WP_011033226.1">
    <property type="nucleotide sequence ID" value="NC_003901.1"/>
</dbReference>
<dbReference type="SMR" id="Q8PXE1"/>
<dbReference type="DNASU" id="1479621"/>
<dbReference type="KEGG" id="mma:MM_1279"/>
<dbReference type="PATRIC" id="fig|192952.21.peg.1486"/>
<dbReference type="eggNOG" id="arCOG00103">
    <property type="taxonomic scope" value="Archaea"/>
</dbReference>
<dbReference type="HOGENOM" id="CLU_701335_0_0_2"/>
<dbReference type="UniPathway" id="UPA00293"/>
<dbReference type="Proteomes" id="UP000000595">
    <property type="component" value="Chromosome"/>
</dbReference>
<dbReference type="GO" id="GO:0033982">
    <property type="term" value="F:3-dehydro-L-gulonate-6-phosphate decarboxylase activity"/>
    <property type="evidence" value="ECO:0007669"/>
    <property type="project" value="TreeGrafter"/>
</dbReference>
<dbReference type="GO" id="GO:0016840">
    <property type="term" value="F:carbon-nitrogen lyase activity"/>
    <property type="evidence" value="ECO:0007669"/>
    <property type="project" value="InterPro"/>
</dbReference>
<dbReference type="GO" id="GO:0043801">
    <property type="term" value="F:hexulose-6-phosphate synthase activity"/>
    <property type="evidence" value="ECO:0007669"/>
    <property type="project" value="UniProtKB-UniRule"/>
</dbReference>
<dbReference type="GO" id="GO:0016836">
    <property type="term" value="F:hydro-lyase activity"/>
    <property type="evidence" value="ECO:0007669"/>
    <property type="project" value="UniProtKB-UniRule"/>
</dbReference>
<dbReference type="GO" id="GO:0004590">
    <property type="term" value="F:orotidine-5'-phosphate decarboxylase activity"/>
    <property type="evidence" value="ECO:0007669"/>
    <property type="project" value="InterPro"/>
</dbReference>
<dbReference type="GO" id="GO:0006207">
    <property type="term" value="P:'de novo' pyrimidine nucleobase biosynthetic process"/>
    <property type="evidence" value="ECO:0007669"/>
    <property type="project" value="InterPro"/>
</dbReference>
<dbReference type="GO" id="GO:0016051">
    <property type="term" value="P:carbohydrate biosynthetic process"/>
    <property type="evidence" value="ECO:0007669"/>
    <property type="project" value="UniProtKB-UniRule"/>
</dbReference>
<dbReference type="GO" id="GO:0019854">
    <property type="term" value="P:L-ascorbic acid catabolic process"/>
    <property type="evidence" value="ECO:0007669"/>
    <property type="project" value="TreeGrafter"/>
</dbReference>
<dbReference type="CDD" id="cd04726">
    <property type="entry name" value="KGPDC_HPS"/>
    <property type="match status" value="1"/>
</dbReference>
<dbReference type="FunFam" id="3.20.20.70:FF:000022">
    <property type="entry name" value="3-keto-L-gulonate-6-phosphate decarboxylase UlaD"/>
    <property type="match status" value="1"/>
</dbReference>
<dbReference type="FunFam" id="3.30.230.60:FF:000001">
    <property type="entry name" value="5,6,7,8-tetrahydromethanopterin hydro-lyase"/>
    <property type="match status" value="1"/>
</dbReference>
<dbReference type="Gene3D" id="3.20.20.70">
    <property type="entry name" value="Aldolase class I"/>
    <property type="match status" value="1"/>
</dbReference>
<dbReference type="Gene3D" id="3.30.230.60">
    <property type="entry name" value="Formaldehyde-activating enzyme"/>
    <property type="match status" value="1"/>
</dbReference>
<dbReference type="HAMAP" id="MF_01268">
    <property type="entry name" value="Fae_Hps"/>
    <property type="match status" value="1"/>
</dbReference>
<dbReference type="InterPro" id="IPR013785">
    <property type="entry name" value="Aldolase_TIM"/>
</dbReference>
<dbReference type="InterPro" id="IPR020868">
    <property type="entry name" value="Fae/Hps"/>
</dbReference>
<dbReference type="InterPro" id="IPR014826">
    <property type="entry name" value="HCHO-activating_enzyme"/>
</dbReference>
<dbReference type="InterPro" id="IPR037075">
    <property type="entry name" value="HCHO-activating_enzyme_sf"/>
</dbReference>
<dbReference type="InterPro" id="IPR041710">
    <property type="entry name" value="HPS/KGPDC"/>
</dbReference>
<dbReference type="InterPro" id="IPR001754">
    <property type="entry name" value="OMPdeCOase_dom"/>
</dbReference>
<dbReference type="InterPro" id="IPR020568">
    <property type="entry name" value="Ribosomal_Su5_D2-typ_SF"/>
</dbReference>
<dbReference type="InterPro" id="IPR011060">
    <property type="entry name" value="RibuloseP-bd_barrel"/>
</dbReference>
<dbReference type="NCBIfam" id="TIGR03126">
    <property type="entry name" value="one_C_fae"/>
    <property type="match status" value="1"/>
</dbReference>
<dbReference type="NCBIfam" id="NF009833">
    <property type="entry name" value="PRK13307.1"/>
    <property type="match status" value="1"/>
</dbReference>
<dbReference type="PANTHER" id="PTHR35039">
    <property type="entry name" value="3-KETO-L-GULONATE-6-PHOSPHATE DECARBOXYLASE SGBH-RELATED"/>
    <property type="match status" value="1"/>
</dbReference>
<dbReference type="PANTHER" id="PTHR35039:SF3">
    <property type="entry name" value="3-KETO-L-GULONATE-6-PHOSPHATE DECARBOXYLASE SGBH-RELATED"/>
    <property type="match status" value="1"/>
</dbReference>
<dbReference type="Pfam" id="PF08714">
    <property type="entry name" value="Fae"/>
    <property type="match status" value="1"/>
</dbReference>
<dbReference type="Pfam" id="PF00215">
    <property type="entry name" value="OMPdecase"/>
    <property type="match status" value="1"/>
</dbReference>
<dbReference type="SMART" id="SM00934">
    <property type="entry name" value="OMPdecase"/>
    <property type="match status" value="1"/>
</dbReference>
<dbReference type="SUPFAM" id="SSF54211">
    <property type="entry name" value="Ribosomal protein S5 domain 2-like"/>
    <property type="match status" value="1"/>
</dbReference>
<dbReference type="SUPFAM" id="SSF51366">
    <property type="entry name" value="Ribulose-phoshate binding barrel"/>
    <property type="match status" value="1"/>
</dbReference>
<keyword id="KW-0119">Carbohydrate metabolism</keyword>
<keyword id="KW-0456">Lyase</keyword>
<keyword id="KW-0511">Multifunctional enzyme</keyword>
<evidence type="ECO:0000255" key="1">
    <source>
        <dbReference type="HAMAP-Rule" id="MF_01268"/>
    </source>
</evidence>
<proteinExistence type="inferred from homology"/>
<name>FAEHP_METMA</name>